<proteinExistence type="inferred from homology"/>
<keyword id="KW-0963">Cytoplasm</keyword>
<keyword id="KW-0444">Lipid biosynthesis</keyword>
<keyword id="KW-0443">Lipid metabolism</keyword>
<keyword id="KW-0594">Phospholipid biosynthesis</keyword>
<keyword id="KW-1208">Phospholipid metabolism</keyword>
<keyword id="KW-0808">Transferase</keyword>
<organism>
    <name type="scientific">Streptococcus pneumoniae (strain Taiwan19F-14)</name>
    <dbReference type="NCBI Taxonomy" id="487213"/>
    <lineage>
        <taxon>Bacteria</taxon>
        <taxon>Bacillati</taxon>
        <taxon>Bacillota</taxon>
        <taxon>Bacilli</taxon>
        <taxon>Lactobacillales</taxon>
        <taxon>Streptococcaceae</taxon>
        <taxon>Streptococcus</taxon>
    </lineage>
</organism>
<comment type="function">
    <text evidence="1">Catalyzes the reversible formation of acyl-phosphate (acyl-PO(4)) from acyl-[acyl-carrier-protein] (acyl-ACP). This enzyme utilizes acyl-ACP as fatty acyl donor, but not acyl-CoA.</text>
</comment>
<comment type="catalytic activity">
    <reaction evidence="1">
        <text>a fatty acyl-[ACP] + phosphate = an acyl phosphate + holo-[ACP]</text>
        <dbReference type="Rhea" id="RHEA:42292"/>
        <dbReference type="Rhea" id="RHEA-COMP:9685"/>
        <dbReference type="Rhea" id="RHEA-COMP:14125"/>
        <dbReference type="ChEBI" id="CHEBI:43474"/>
        <dbReference type="ChEBI" id="CHEBI:59918"/>
        <dbReference type="ChEBI" id="CHEBI:64479"/>
        <dbReference type="ChEBI" id="CHEBI:138651"/>
        <dbReference type="EC" id="2.3.1.274"/>
    </reaction>
</comment>
<comment type="pathway">
    <text evidence="1">Lipid metabolism; phospholipid metabolism.</text>
</comment>
<comment type="subunit">
    <text evidence="1">Homodimer. Probably interacts with PlsY.</text>
</comment>
<comment type="subcellular location">
    <subcellularLocation>
        <location evidence="1">Cytoplasm</location>
    </subcellularLocation>
    <text evidence="1">Associated with the membrane possibly through PlsY.</text>
</comment>
<comment type="similarity">
    <text evidence="1">Belongs to the PlsX family.</text>
</comment>
<feature type="chain" id="PRO_1000193151" description="Phosphate acyltransferase">
    <location>
        <begin position="1"/>
        <end position="330"/>
    </location>
</feature>
<dbReference type="EC" id="2.3.1.274" evidence="1"/>
<dbReference type="EMBL" id="CP000921">
    <property type="protein sequence ID" value="ACO23367.1"/>
    <property type="molecule type" value="Genomic_DNA"/>
</dbReference>
<dbReference type="RefSeq" id="WP_000717456.1">
    <property type="nucleotide sequence ID" value="NC_012469.1"/>
</dbReference>
<dbReference type="SMR" id="C1CNR5"/>
<dbReference type="KEGG" id="snt:SPT_0075"/>
<dbReference type="HOGENOM" id="CLU_039379_1_1_9"/>
<dbReference type="UniPathway" id="UPA00085"/>
<dbReference type="GO" id="GO:0005737">
    <property type="term" value="C:cytoplasm"/>
    <property type="evidence" value="ECO:0007669"/>
    <property type="project" value="UniProtKB-SubCell"/>
</dbReference>
<dbReference type="GO" id="GO:0043811">
    <property type="term" value="F:phosphate:acyl-[acyl carrier protein] acyltransferase activity"/>
    <property type="evidence" value="ECO:0007669"/>
    <property type="project" value="UniProtKB-UniRule"/>
</dbReference>
<dbReference type="GO" id="GO:0006633">
    <property type="term" value="P:fatty acid biosynthetic process"/>
    <property type="evidence" value="ECO:0007669"/>
    <property type="project" value="UniProtKB-UniRule"/>
</dbReference>
<dbReference type="GO" id="GO:0008654">
    <property type="term" value="P:phospholipid biosynthetic process"/>
    <property type="evidence" value="ECO:0007669"/>
    <property type="project" value="UniProtKB-KW"/>
</dbReference>
<dbReference type="Gene3D" id="3.40.718.10">
    <property type="entry name" value="Isopropylmalate Dehydrogenase"/>
    <property type="match status" value="1"/>
</dbReference>
<dbReference type="HAMAP" id="MF_00019">
    <property type="entry name" value="PlsX"/>
    <property type="match status" value="1"/>
</dbReference>
<dbReference type="InterPro" id="IPR003664">
    <property type="entry name" value="FA_synthesis"/>
</dbReference>
<dbReference type="InterPro" id="IPR012281">
    <property type="entry name" value="Phospholipid_synth_PlsX-like"/>
</dbReference>
<dbReference type="NCBIfam" id="TIGR00182">
    <property type="entry name" value="plsX"/>
    <property type="match status" value="1"/>
</dbReference>
<dbReference type="PANTHER" id="PTHR30100">
    <property type="entry name" value="FATTY ACID/PHOSPHOLIPID SYNTHESIS PROTEIN PLSX"/>
    <property type="match status" value="1"/>
</dbReference>
<dbReference type="PANTHER" id="PTHR30100:SF1">
    <property type="entry name" value="PHOSPHATE ACYLTRANSFERASE"/>
    <property type="match status" value="1"/>
</dbReference>
<dbReference type="Pfam" id="PF02504">
    <property type="entry name" value="FA_synthesis"/>
    <property type="match status" value="1"/>
</dbReference>
<dbReference type="PIRSF" id="PIRSF002465">
    <property type="entry name" value="Phsphlp_syn_PlsX"/>
    <property type="match status" value="1"/>
</dbReference>
<dbReference type="SUPFAM" id="SSF53659">
    <property type="entry name" value="Isocitrate/Isopropylmalate dehydrogenase-like"/>
    <property type="match status" value="1"/>
</dbReference>
<sequence length="330" mass="34918">MKKIAVDAMGGDYAPQAIVEGVNQALSDFSDIEVQLYGDEAKIKQYLTATERVSIIHTDEKIDSDDEPTRAIRNKKNASMVLAAKAVKDGEADAVLSAGNTGALLAAGFFIVGRIKNIDRPGLMSTLPTVDGKGFDMLDLGANAENTAQHLHQYAVLGSFYAKNVRGIAQPRVGLLNNGTESSKGDPLRKETYELLAADESLNFIGNVEARDLMNGVADVVVADGFTGNAVLKSIEGTAMGIMGLLKTAITGGGLRAKLGALLLKDSLRGLKKQLNYSDVGGAVLFGVKAPVVKTHGSSDAKAVYSTIRQIRTMLETDVVAQTAREFSGE</sequence>
<accession>C1CNR5</accession>
<reference key="1">
    <citation type="journal article" date="2010" name="Genome Biol.">
        <title>Structure and dynamics of the pan-genome of Streptococcus pneumoniae and closely related species.</title>
        <authorList>
            <person name="Donati C."/>
            <person name="Hiller N.L."/>
            <person name="Tettelin H."/>
            <person name="Muzzi A."/>
            <person name="Croucher N.J."/>
            <person name="Angiuoli S.V."/>
            <person name="Oggioni M."/>
            <person name="Dunning Hotopp J.C."/>
            <person name="Hu F.Z."/>
            <person name="Riley D.R."/>
            <person name="Covacci A."/>
            <person name="Mitchell T.J."/>
            <person name="Bentley S.D."/>
            <person name="Kilian M."/>
            <person name="Ehrlich G.D."/>
            <person name="Rappuoli R."/>
            <person name="Moxon E.R."/>
            <person name="Masignani V."/>
        </authorList>
    </citation>
    <scope>NUCLEOTIDE SEQUENCE [LARGE SCALE GENOMIC DNA]</scope>
    <source>
        <strain>Taiwan19F-14</strain>
    </source>
</reference>
<gene>
    <name evidence="1" type="primary">plsX</name>
    <name type="ordered locus">SPT_0075</name>
</gene>
<protein>
    <recommendedName>
        <fullName evidence="1">Phosphate acyltransferase</fullName>
        <ecNumber evidence="1">2.3.1.274</ecNumber>
    </recommendedName>
    <alternativeName>
        <fullName evidence="1">Acyl-ACP phosphotransacylase</fullName>
    </alternativeName>
    <alternativeName>
        <fullName evidence="1">Acyl-[acyl-carrier-protein]--phosphate acyltransferase</fullName>
    </alternativeName>
    <alternativeName>
        <fullName evidence="1">Phosphate-acyl-ACP acyltransferase</fullName>
    </alternativeName>
</protein>
<evidence type="ECO:0000255" key="1">
    <source>
        <dbReference type="HAMAP-Rule" id="MF_00019"/>
    </source>
</evidence>
<name>PLSX_STRZT</name>